<gene>
    <name evidence="1" type="primary">rplB</name>
    <name type="ordered locus">SDY_3493</name>
</gene>
<reference key="1">
    <citation type="journal article" date="2005" name="Nucleic Acids Res.">
        <title>Genome dynamics and diversity of Shigella species, the etiologic agents of bacillary dysentery.</title>
        <authorList>
            <person name="Yang F."/>
            <person name="Yang J."/>
            <person name="Zhang X."/>
            <person name="Chen L."/>
            <person name="Jiang Y."/>
            <person name="Yan Y."/>
            <person name="Tang X."/>
            <person name="Wang J."/>
            <person name="Xiong Z."/>
            <person name="Dong J."/>
            <person name="Xue Y."/>
            <person name="Zhu Y."/>
            <person name="Xu X."/>
            <person name="Sun L."/>
            <person name="Chen S."/>
            <person name="Nie H."/>
            <person name="Peng J."/>
            <person name="Xu J."/>
            <person name="Wang Y."/>
            <person name="Yuan Z."/>
            <person name="Wen Y."/>
            <person name="Yao Z."/>
            <person name="Shen Y."/>
            <person name="Qiang B."/>
            <person name="Hou Y."/>
            <person name="Yu J."/>
            <person name="Jin Q."/>
        </authorList>
    </citation>
    <scope>NUCLEOTIDE SEQUENCE [LARGE SCALE GENOMIC DNA]</scope>
    <source>
        <strain>Sd197</strain>
    </source>
</reference>
<proteinExistence type="inferred from homology"/>
<keyword id="KW-0007">Acetylation</keyword>
<keyword id="KW-1185">Reference proteome</keyword>
<keyword id="KW-0687">Ribonucleoprotein</keyword>
<keyword id="KW-0689">Ribosomal protein</keyword>
<keyword id="KW-0694">RNA-binding</keyword>
<keyword id="KW-0699">rRNA-binding</keyword>
<accession>Q32B34</accession>
<evidence type="ECO:0000255" key="1">
    <source>
        <dbReference type="HAMAP-Rule" id="MF_01320"/>
    </source>
</evidence>
<evidence type="ECO:0000256" key="2">
    <source>
        <dbReference type="SAM" id="MobiDB-lite"/>
    </source>
</evidence>
<evidence type="ECO:0000305" key="3"/>
<sequence>MAAVKCKPTSPGRRHVVKVVNPELHKGKPFAPLLEKNSKSGGRNNNGRITTRHIGGGHKQAYRIVDFKRNKDGIPAVVERLEYDPNRSANIALVLYKDGERRYILAPKGLKAGDQIQSGVDAAIKPGNTLPMRNIPVGSTVHNVEMKPGKGGQLARSAGTYVQIVARDGAYVTLRLRSGEMRKVEADCRATLGEVGNAEHMLRVLGKAGAARWRGVRPTVRGTAMNPVDHPHGGGEGRNFGKHPVTPWGVQTKGKKTRSNKRTDKFIVRRRSK</sequence>
<organism>
    <name type="scientific">Shigella dysenteriae serotype 1 (strain Sd197)</name>
    <dbReference type="NCBI Taxonomy" id="300267"/>
    <lineage>
        <taxon>Bacteria</taxon>
        <taxon>Pseudomonadati</taxon>
        <taxon>Pseudomonadota</taxon>
        <taxon>Gammaproteobacteria</taxon>
        <taxon>Enterobacterales</taxon>
        <taxon>Enterobacteriaceae</taxon>
        <taxon>Shigella</taxon>
    </lineage>
</organism>
<comment type="function">
    <text evidence="1">One of the primary rRNA binding proteins. Required for association of the 30S and 50S subunits to form the 70S ribosome, for tRNA binding and peptide bond formation. It has been suggested to have peptidyltransferase activity; this is somewhat controversial. Makes several contacts with the 16S rRNA in the 70S ribosome.</text>
</comment>
<comment type="subunit">
    <text evidence="1">Part of the 50S ribosomal subunit. Forms a bridge to the 30S subunit in the 70S ribosome.</text>
</comment>
<comment type="similarity">
    <text evidence="1">Belongs to the universal ribosomal protein uL2 family.</text>
</comment>
<protein>
    <recommendedName>
        <fullName evidence="1">Large ribosomal subunit protein uL2</fullName>
    </recommendedName>
    <alternativeName>
        <fullName evidence="3">50S ribosomal protein L2</fullName>
    </alternativeName>
</protein>
<dbReference type="EMBL" id="CP000034">
    <property type="protein sequence ID" value="ABB63471.1"/>
    <property type="molecule type" value="Genomic_DNA"/>
</dbReference>
<dbReference type="RefSeq" id="WP_000741730.1">
    <property type="nucleotide sequence ID" value="NC_007606.1"/>
</dbReference>
<dbReference type="RefSeq" id="YP_404962.1">
    <property type="nucleotide sequence ID" value="NC_007606.1"/>
</dbReference>
<dbReference type="SMR" id="Q32B34"/>
<dbReference type="STRING" id="300267.SDY_3493"/>
<dbReference type="EnsemblBacteria" id="ABB63471">
    <property type="protein sequence ID" value="ABB63471"/>
    <property type="gene ID" value="SDY_3493"/>
</dbReference>
<dbReference type="KEGG" id="sdy:SDY_3493"/>
<dbReference type="PATRIC" id="fig|300267.13.peg.4146"/>
<dbReference type="HOGENOM" id="CLU_036235_2_1_6"/>
<dbReference type="Proteomes" id="UP000002716">
    <property type="component" value="Chromosome"/>
</dbReference>
<dbReference type="GO" id="GO:0005829">
    <property type="term" value="C:cytosol"/>
    <property type="evidence" value="ECO:0007669"/>
    <property type="project" value="UniProtKB-ARBA"/>
</dbReference>
<dbReference type="GO" id="GO:0015934">
    <property type="term" value="C:large ribosomal subunit"/>
    <property type="evidence" value="ECO:0007669"/>
    <property type="project" value="InterPro"/>
</dbReference>
<dbReference type="GO" id="GO:0019843">
    <property type="term" value="F:rRNA binding"/>
    <property type="evidence" value="ECO:0007669"/>
    <property type="project" value="UniProtKB-UniRule"/>
</dbReference>
<dbReference type="GO" id="GO:0003735">
    <property type="term" value="F:structural constituent of ribosome"/>
    <property type="evidence" value="ECO:0007669"/>
    <property type="project" value="InterPro"/>
</dbReference>
<dbReference type="GO" id="GO:0016740">
    <property type="term" value="F:transferase activity"/>
    <property type="evidence" value="ECO:0007669"/>
    <property type="project" value="InterPro"/>
</dbReference>
<dbReference type="GO" id="GO:0002181">
    <property type="term" value="P:cytoplasmic translation"/>
    <property type="evidence" value="ECO:0007669"/>
    <property type="project" value="TreeGrafter"/>
</dbReference>
<dbReference type="FunFam" id="2.30.30.30:FF:000001">
    <property type="entry name" value="50S ribosomal protein L2"/>
    <property type="match status" value="1"/>
</dbReference>
<dbReference type="FunFam" id="2.40.50.140:FF:000003">
    <property type="entry name" value="50S ribosomal protein L2"/>
    <property type="match status" value="1"/>
</dbReference>
<dbReference type="FunFam" id="4.10.950.10:FF:000001">
    <property type="entry name" value="50S ribosomal protein L2"/>
    <property type="match status" value="1"/>
</dbReference>
<dbReference type="Gene3D" id="2.30.30.30">
    <property type="match status" value="1"/>
</dbReference>
<dbReference type="Gene3D" id="2.40.50.140">
    <property type="entry name" value="Nucleic acid-binding proteins"/>
    <property type="match status" value="1"/>
</dbReference>
<dbReference type="Gene3D" id="4.10.950.10">
    <property type="entry name" value="Ribosomal protein L2, domain 3"/>
    <property type="match status" value="1"/>
</dbReference>
<dbReference type="HAMAP" id="MF_01320_B">
    <property type="entry name" value="Ribosomal_uL2_B"/>
    <property type="match status" value="1"/>
</dbReference>
<dbReference type="InterPro" id="IPR012340">
    <property type="entry name" value="NA-bd_OB-fold"/>
</dbReference>
<dbReference type="InterPro" id="IPR014722">
    <property type="entry name" value="Rib_uL2_dom2"/>
</dbReference>
<dbReference type="InterPro" id="IPR002171">
    <property type="entry name" value="Ribosomal_uL2"/>
</dbReference>
<dbReference type="InterPro" id="IPR005880">
    <property type="entry name" value="Ribosomal_uL2_bac/org-type"/>
</dbReference>
<dbReference type="InterPro" id="IPR022669">
    <property type="entry name" value="Ribosomal_uL2_C"/>
</dbReference>
<dbReference type="InterPro" id="IPR022671">
    <property type="entry name" value="Ribosomal_uL2_CS"/>
</dbReference>
<dbReference type="InterPro" id="IPR014726">
    <property type="entry name" value="Ribosomal_uL2_dom3"/>
</dbReference>
<dbReference type="InterPro" id="IPR022666">
    <property type="entry name" value="Ribosomal_uL2_RNA-bd_dom"/>
</dbReference>
<dbReference type="InterPro" id="IPR008991">
    <property type="entry name" value="Translation_prot_SH3-like_sf"/>
</dbReference>
<dbReference type="NCBIfam" id="TIGR01171">
    <property type="entry name" value="rplB_bact"/>
    <property type="match status" value="1"/>
</dbReference>
<dbReference type="PANTHER" id="PTHR13691:SF5">
    <property type="entry name" value="LARGE RIBOSOMAL SUBUNIT PROTEIN UL2M"/>
    <property type="match status" value="1"/>
</dbReference>
<dbReference type="PANTHER" id="PTHR13691">
    <property type="entry name" value="RIBOSOMAL PROTEIN L2"/>
    <property type="match status" value="1"/>
</dbReference>
<dbReference type="Pfam" id="PF00181">
    <property type="entry name" value="Ribosomal_L2"/>
    <property type="match status" value="1"/>
</dbReference>
<dbReference type="Pfam" id="PF03947">
    <property type="entry name" value="Ribosomal_L2_C"/>
    <property type="match status" value="1"/>
</dbReference>
<dbReference type="PIRSF" id="PIRSF002158">
    <property type="entry name" value="Ribosomal_L2"/>
    <property type="match status" value="1"/>
</dbReference>
<dbReference type="SMART" id="SM01383">
    <property type="entry name" value="Ribosomal_L2"/>
    <property type="match status" value="1"/>
</dbReference>
<dbReference type="SMART" id="SM01382">
    <property type="entry name" value="Ribosomal_L2_C"/>
    <property type="match status" value="1"/>
</dbReference>
<dbReference type="SUPFAM" id="SSF50249">
    <property type="entry name" value="Nucleic acid-binding proteins"/>
    <property type="match status" value="1"/>
</dbReference>
<dbReference type="SUPFAM" id="SSF50104">
    <property type="entry name" value="Translation proteins SH3-like domain"/>
    <property type="match status" value="1"/>
</dbReference>
<dbReference type="PROSITE" id="PS00467">
    <property type="entry name" value="RIBOSOMAL_L2"/>
    <property type="match status" value="1"/>
</dbReference>
<name>RL2_SHIDS</name>
<feature type="chain" id="PRO_0000237241" description="Large ribosomal subunit protein uL2">
    <location>
        <begin position="1"/>
        <end position="273"/>
    </location>
</feature>
<feature type="region of interest" description="Disordered" evidence="2">
    <location>
        <begin position="28"/>
        <end position="53"/>
    </location>
</feature>
<feature type="region of interest" description="Disordered" evidence="2">
    <location>
        <begin position="221"/>
        <end position="273"/>
    </location>
</feature>
<feature type="compositionally biased region" description="Low complexity" evidence="2">
    <location>
        <begin position="39"/>
        <end position="48"/>
    </location>
</feature>
<feature type="modified residue" description="N6-acetyllysine" evidence="1">
    <location>
        <position position="242"/>
    </location>
</feature>